<comment type="function">
    <text evidence="1">Receptor for the neuromedin-U and neuromedin-S neuropeptides.</text>
</comment>
<comment type="subcellular location">
    <subcellularLocation>
        <location>Cell membrane</location>
        <topology>Multi-pass membrane protein</topology>
    </subcellularLocation>
</comment>
<comment type="tissue specificity">
    <text evidence="4">Ubiquitously expressed.</text>
</comment>
<comment type="similarity">
    <text evidence="3">Belongs to the G-protein coupled receptor 1 family.</text>
</comment>
<comment type="sequence caution" evidence="5">
    <conflict type="erroneous initiation">
        <sequence resource="EMBL-CDS" id="AAI20823"/>
    </conflict>
    <text>Truncated N-terminus.</text>
</comment>
<comment type="sequence caution" evidence="5">
    <conflict type="erroneous initiation">
        <sequence resource="EMBL-CDS" id="AAI37776"/>
    </conflict>
    <text>Truncated N-terminus.</text>
</comment>
<comment type="sequence caution" evidence="5">
    <conflict type="erroneous gene model prediction">
        <sequence resource="EMBL-CDS" id="EDL40217"/>
    </conflict>
</comment>
<proteinExistence type="evidence at transcript level"/>
<name>NMUR1_MOUSE</name>
<accession>O55040</accession>
<accession>G5E871</accession>
<accession>Q0VB23</accession>
<feature type="chain" id="PRO_0000069907" description="Neuromedin-U receptor 1">
    <location>
        <begin position="1"/>
        <end position="428"/>
    </location>
</feature>
<feature type="topological domain" description="Extracellular" evidence="2">
    <location>
        <begin position="1"/>
        <end position="59"/>
    </location>
</feature>
<feature type="transmembrane region" description="Helical; Name=1" evidence="2">
    <location>
        <begin position="60"/>
        <end position="80"/>
    </location>
</feature>
<feature type="topological domain" description="Cytoplasmic" evidence="2">
    <location>
        <begin position="81"/>
        <end position="96"/>
    </location>
</feature>
<feature type="transmembrane region" description="Helical; Name=2" evidence="2">
    <location>
        <begin position="97"/>
        <end position="117"/>
    </location>
</feature>
<feature type="topological domain" description="Extracellular" evidence="2">
    <location>
        <begin position="118"/>
        <end position="137"/>
    </location>
</feature>
<feature type="transmembrane region" description="Helical; Name=3" evidence="2">
    <location>
        <begin position="138"/>
        <end position="158"/>
    </location>
</feature>
<feature type="topological domain" description="Cytoplasmic" evidence="2">
    <location>
        <begin position="159"/>
        <end position="181"/>
    </location>
</feature>
<feature type="transmembrane region" description="Helical; Name=4" evidence="2">
    <location>
        <begin position="182"/>
        <end position="202"/>
    </location>
</feature>
<feature type="topological domain" description="Extracellular" evidence="2">
    <location>
        <begin position="203"/>
        <end position="235"/>
    </location>
</feature>
<feature type="transmembrane region" description="Helical; Name=5" evidence="2">
    <location>
        <begin position="236"/>
        <end position="256"/>
    </location>
</feature>
<feature type="topological domain" description="Cytoplasmic" evidence="2">
    <location>
        <begin position="257"/>
        <end position="294"/>
    </location>
</feature>
<feature type="transmembrane region" description="Helical; Name=6" evidence="2">
    <location>
        <begin position="295"/>
        <end position="315"/>
    </location>
</feature>
<feature type="topological domain" description="Extracellular" evidence="2">
    <location>
        <begin position="316"/>
        <end position="339"/>
    </location>
</feature>
<feature type="transmembrane region" description="Helical; Name=7" evidence="2">
    <location>
        <begin position="340"/>
        <end position="360"/>
    </location>
</feature>
<feature type="topological domain" description="Cytoplasmic" evidence="2">
    <location>
        <begin position="361"/>
        <end position="428"/>
    </location>
</feature>
<feature type="glycosylation site" description="N-linked (GlcNAc...) asparagine" evidence="2">
    <location>
        <position position="27"/>
    </location>
</feature>
<feature type="glycosylation site" description="N-linked (GlcNAc...) asparagine" evidence="2">
    <location>
        <position position="41"/>
    </location>
</feature>
<feature type="disulfide bond" evidence="3">
    <location>
        <begin position="134"/>
        <end position="219"/>
    </location>
</feature>
<keyword id="KW-1003">Cell membrane</keyword>
<keyword id="KW-1015">Disulfide bond</keyword>
<keyword id="KW-0297">G-protein coupled receptor</keyword>
<keyword id="KW-0325">Glycoprotein</keyword>
<keyword id="KW-0472">Membrane</keyword>
<keyword id="KW-0675">Receptor</keyword>
<keyword id="KW-1185">Reference proteome</keyword>
<keyword id="KW-0807">Transducer</keyword>
<keyword id="KW-0812">Transmembrane</keyword>
<keyword id="KW-1133">Transmembrane helix</keyword>
<evidence type="ECO:0000250" key="1"/>
<evidence type="ECO:0000255" key="2"/>
<evidence type="ECO:0000255" key="3">
    <source>
        <dbReference type="PROSITE-ProRule" id="PRU00521"/>
    </source>
</evidence>
<evidence type="ECO:0000269" key="4">
    <source>
    </source>
</evidence>
<evidence type="ECO:0000305" key="5"/>
<reference key="1">
    <citation type="journal article" date="2009" name="PLoS Biol.">
        <title>Lineage-specific biology revealed by a finished genome assembly of the mouse.</title>
        <authorList>
            <person name="Church D.M."/>
            <person name="Goodstadt L."/>
            <person name="Hillier L.W."/>
            <person name="Zody M.C."/>
            <person name="Goldstein S."/>
            <person name="She X."/>
            <person name="Bult C.J."/>
            <person name="Agarwala R."/>
            <person name="Cherry J.L."/>
            <person name="DiCuccio M."/>
            <person name="Hlavina W."/>
            <person name="Kapustin Y."/>
            <person name="Meric P."/>
            <person name="Maglott D."/>
            <person name="Birtle Z."/>
            <person name="Marques A.C."/>
            <person name="Graves T."/>
            <person name="Zhou S."/>
            <person name="Teague B."/>
            <person name="Potamousis K."/>
            <person name="Churas C."/>
            <person name="Place M."/>
            <person name="Herschleb J."/>
            <person name="Runnheim R."/>
            <person name="Forrest D."/>
            <person name="Amos-Landgraf J."/>
            <person name="Schwartz D.C."/>
            <person name="Cheng Z."/>
            <person name="Lindblad-Toh K."/>
            <person name="Eichler E.E."/>
            <person name="Ponting C.P."/>
        </authorList>
    </citation>
    <scope>NUCLEOTIDE SEQUENCE [LARGE SCALE GENOMIC DNA]</scope>
    <source>
        <strain>C57BL/6J</strain>
    </source>
</reference>
<reference key="2">
    <citation type="submission" date="2005-09" db="EMBL/GenBank/DDBJ databases">
        <authorList>
            <person name="Mural R.J."/>
            <person name="Adams M.D."/>
            <person name="Myers E.W."/>
            <person name="Smith H.O."/>
            <person name="Venter J.C."/>
        </authorList>
    </citation>
    <scope>NUCLEOTIDE SEQUENCE [LARGE SCALE GENOMIC DNA]</scope>
</reference>
<reference key="3">
    <citation type="journal article" date="2004" name="Genome Res.">
        <title>The status, quality, and expansion of the NIH full-length cDNA project: the Mammalian Gene Collection (MGC).</title>
        <authorList>
            <consortium name="The MGC Project Team"/>
        </authorList>
    </citation>
    <scope>NUCLEOTIDE SEQUENCE [LARGE SCALE MRNA] OF 17-428</scope>
    <source>
        <tissue>Brain</tissue>
    </source>
</reference>
<reference key="4">
    <citation type="journal article" date="1998" name="Genomics">
        <title>Cloning and characterization of a human and murine T-cell orphan G-protein-coupled receptor similar to the growth hormone secretagogue and neurotensin receptors.</title>
        <authorList>
            <person name="Tan C.P."/>
            <person name="McKee K.K."/>
            <person name="Liu Q."/>
            <person name="Palyha O.C."/>
            <person name="Feighner S.D."/>
            <person name="Hreniuk D.L."/>
            <person name="Smith R.G."/>
            <person name="Howard A.D."/>
        </authorList>
    </citation>
    <scope>NUCLEOTIDE SEQUENCE [MRNA] OF 24-428</scope>
    <scope>TISSUE SPECIFICITY</scope>
</reference>
<dbReference type="EMBL" id="AC102609">
    <property type="status" value="NOT_ANNOTATED_CDS"/>
    <property type="molecule type" value="Genomic_DNA"/>
</dbReference>
<dbReference type="EMBL" id="CH466520">
    <property type="protein sequence ID" value="EDL40217.1"/>
    <property type="status" value="ALT_SEQ"/>
    <property type="molecule type" value="Genomic_DNA"/>
</dbReference>
<dbReference type="EMBL" id="BC120822">
    <property type="protein sequence ID" value="AAI20823.1"/>
    <property type="status" value="ALT_INIT"/>
    <property type="molecule type" value="mRNA"/>
</dbReference>
<dbReference type="EMBL" id="BC137775">
    <property type="protein sequence ID" value="AAI37776.1"/>
    <property type="status" value="ALT_INIT"/>
    <property type="molecule type" value="mRNA"/>
</dbReference>
<dbReference type="EMBL" id="AF044602">
    <property type="protein sequence ID" value="AAC02681.1"/>
    <property type="molecule type" value="mRNA"/>
</dbReference>
<dbReference type="CCDS" id="CCDS15119.2"/>
<dbReference type="RefSeq" id="NP_001306156.1">
    <property type="nucleotide sequence ID" value="NM_001319227.1"/>
</dbReference>
<dbReference type="RefSeq" id="NP_034471.1">
    <property type="nucleotide sequence ID" value="NM_010341.1"/>
</dbReference>
<dbReference type="SMR" id="O55040"/>
<dbReference type="FunCoup" id="O55040">
    <property type="interactions" value="1102"/>
</dbReference>
<dbReference type="STRING" id="10090.ENSMUSP00000148767"/>
<dbReference type="BindingDB" id="O55040"/>
<dbReference type="ChEMBL" id="CHEMBL3351216"/>
<dbReference type="GlyCosmos" id="O55040">
    <property type="glycosylation" value="2 sites, No reported glycans"/>
</dbReference>
<dbReference type="GlyGen" id="O55040">
    <property type="glycosylation" value="2 sites"/>
</dbReference>
<dbReference type="iPTMnet" id="O55040"/>
<dbReference type="PhosphoSitePlus" id="O55040"/>
<dbReference type="PaxDb" id="10090-ENSMUSP00000027440"/>
<dbReference type="Antibodypedia" id="20210">
    <property type="antibodies" value="226 antibodies from 29 providers"/>
</dbReference>
<dbReference type="DNASU" id="14767"/>
<dbReference type="Ensembl" id="ENSMUST00000212058.2">
    <property type="protein sequence ID" value="ENSMUSP00000148767.2"/>
    <property type="gene ID" value="ENSMUSG00000026237.7"/>
</dbReference>
<dbReference type="GeneID" id="14767"/>
<dbReference type="KEGG" id="mmu:14767"/>
<dbReference type="UCSC" id="uc007bvn.2">
    <property type="organism name" value="mouse"/>
</dbReference>
<dbReference type="AGR" id="MGI:1341898"/>
<dbReference type="CTD" id="10316"/>
<dbReference type="MGI" id="MGI:1341898">
    <property type="gene designation" value="Nmur1"/>
</dbReference>
<dbReference type="VEuPathDB" id="HostDB:ENSMUSG00000026237"/>
<dbReference type="eggNOG" id="KOG3656">
    <property type="taxonomic scope" value="Eukaryota"/>
</dbReference>
<dbReference type="GeneTree" id="ENSGT01120000271823"/>
<dbReference type="InParanoid" id="O55040"/>
<dbReference type="OMA" id="QLHVPCR"/>
<dbReference type="OrthoDB" id="5962705at2759"/>
<dbReference type="TreeFam" id="TF318522"/>
<dbReference type="Reactome" id="R-MMU-375276">
    <property type="pathway name" value="Peptide ligand-binding receptors"/>
</dbReference>
<dbReference type="Reactome" id="R-MMU-416476">
    <property type="pathway name" value="G alpha (q) signalling events"/>
</dbReference>
<dbReference type="Reactome" id="R-MMU-418594">
    <property type="pathway name" value="G alpha (i) signalling events"/>
</dbReference>
<dbReference type="BioGRID-ORCS" id="14767">
    <property type="hits" value="0 hits in 77 CRISPR screens"/>
</dbReference>
<dbReference type="PRO" id="PR:O55040"/>
<dbReference type="Proteomes" id="UP000000589">
    <property type="component" value="Chromosome 1"/>
</dbReference>
<dbReference type="RNAct" id="O55040">
    <property type="molecule type" value="protein"/>
</dbReference>
<dbReference type="Bgee" id="ENSMUSG00000026237">
    <property type="expression patterns" value="Expressed in heart right ventricle and 19 other cell types or tissues"/>
</dbReference>
<dbReference type="ExpressionAtlas" id="O55040">
    <property type="expression patterns" value="baseline and differential"/>
</dbReference>
<dbReference type="GO" id="GO:0005929">
    <property type="term" value="C:cilium"/>
    <property type="evidence" value="ECO:0000314"/>
    <property type="project" value="MGI"/>
</dbReference>
<dbReference type="GO" id="GO:0005886">
    <property type="term" value="C:plasma membrane"/>
    <property type="evidence" value="ECO:0000305"/>
    <property type="project" value="MGI"/>
</dbReference>
<dbReference type="GO" id="GO:0042924">
    <property type="term" value="F:neuromedin U binding"/>
    <property type="evidence" value="ECO:0007669"/>
    <property type="project" value="Ensembl"/>
</dbReference>
<dbReference type="GO" id="GO:0001607">
    <property type="term" value="F:neuromedin U receptor activity"/>
    <property type="evidence" value="ECO:0007669"/>
    <property type="project" value="Ensembl"/>
</dbReference>
<dbReference type="GO" id="GO:0008188">
    <property type="term" value="F:neuropeptide receptor activity"/>
    <property type="evidence" value="ECO:0000353"/>
    <property type="project" value="MGI"/>
</dbReference>
<dbReference type="GO" id="GO:0019722">
    <property type="term" value="P:calcium-mediated signaling"/>
    <property type="evidence" value="ECO:0007669"/>
    <property type="project" value="Ensembl"/>
</dbReference>
<dbReference type="GO" id="GO:0006821">
    <property type="term" value="P:chloride transport"/>
    <property type="evidence" value="ECO:0007669"/>
    <property type="project" value="Ensembl"/>
</dbReference>
<dbReference type="GO" id="GO:0007218">
    <property type="term" value="P:neuropeptide signaling pathway"/>
    <property type="evidence" value="ECO:0000314"/>
    <property type="project" value="MGI"/>
</dbReference>
<dbReference type="GO" id="GO:0007200">
    <property type="term" value="P:phospholipase C-activating G protein-coupled receptor signaling pathway"/>
    <property type="evidence" value="ECO:0007669"/>
    <property type="project" value="Ensembl"/>
</dbReference>
<dbReference type="GO" id="GO:0050850">
    <property type="term" value="P:positive regulation of calcium-mediated signaling"/>
    <property type="evidence" value="ECO:0007669"/>
    <property type="project" value="Ensembl"/>
</dbReference>
<dbReference type="GO" id="GO:0006939">
    <property type="term" value="P:smooth muscle contraction"/>
    <property type="evidence" value="ECO:0007669"/>
    <property type="project" value="Ensembl"/>
</dbReference>
<dbReference type="CDD" id="cd15358">
    <property type="entry name" value="7tmA_NMU-R1"/>
    <property type="match status" value="1"/>
</dbReference>
<dbReference type="FunFam" id="1.20.1070.10:FF:000214">
    <property type="entry name" value="Neuromedin U receptor 1"/>
    <property type="match status" value="1"/>
</dbReference>
<dbReference type="Gene3D" id="1.20.1070.10">
    <property type="entry name" value="Rhodopsin 7-helix transmembrane proteins"/>
    <property type="match status" value="1"/>
</dbReference>
<dbReference type="InterPro" id="IPR000276">
    <property type="entry name" value="GPCR_Rhodpsn"/>
</dbReference>
<dbReference type="InterPro" id="IPR017452">
    <property type="entry name" value="GPCR_Rhodpsn_7TM"/>
</dbReference>
<dbReference type="InterPro" id="IPR005390">
    <property type="entry name" value="NeuromedU_rcpt"/>
</dbReference>
<dbReference type="InterPro" id="IPR005391">
    <property type="entry name" value="NeuromedU_rcpt_1"/>
</dbReference>
<dbReference type="PANTHER" id="PTHR24243">
    <property type="entry name" value="G-PROTEIN COUPLED RECEPTOR"/>
    <property type="match status" value="1"/>
</dbReference>
<dbReference type="PANTHER" id="PTHR24243:SF109">
    <property type="entry name" value="NEUROMEDIN-U RECEPTOR 1"/>
    <property type="match status" value="1"/>
</dbReference>
<dbReference type="Pfam" id="PF00001">
    <property type="entry name" value="7tm_1"/>
    <property type="match status" value="1"/>
</dbReference>
<dbReference type="PRINTS" id="PR00237">
    <property type="entry name" value="GPCRRHODOPSN"/>
</dbReference>
<dbReference type="PRINTS" id="PR01565">
    <property type="entry name" value="NEUROMEDINUR"/>
</dbReference>
<dbReference type="PRINTS" id="PR01566">
    <property type="entry name" value="NEUROMEDNU1R"/>
</dbReference>
<dbReference type="SMART" id="SM01381">
    <property type="entry name" value="7TM_GPCR_Srsx"/>
    <property type="match status" value="1"/>
</dbReference>
<dbReference type="SUPFAM" id="SSF81321">
    <property type="entry name" value="Family A G protein-coupled receptor-like"/>
    <property type="match status" value="1"/>
</dbReference>
<dbReference type="PROSITE" id="PS00237">
    <property type="entry name" value="G_PROTEIN_RECEP_F1_1"/>
    <property type="match status" value="1"/>
</dbReference>
<dbReference type="PROSITE" id="PS50262">
    <property type="entry name" value="G_PROTEIN_RECEP_F1_2"/>
    <property type="match status" value="1"/>
</dbReference>
<gene>
    <name type="primary">Nmur1</name>
    <name type="synonym">Gpr66</name>
</gene>
<organism>
    <name type="scientific">Mus musculus</name>
    <name type="common">Mouse</name>
    <dbReference type="NCBI Taxonomy" id="10090"/>
    <lineage>
        <taxon>Eukaryota</taxon>
        <taxon>Metazoa</taxon>
        <taxon>Chordata</taxon>
        <taxon>Craniata</taxon>
        <taxon>Vertebrata</taxon>
        <taxon>Euteleostomi</taxon>
        <taxon>Mammalia</taxon>
        <taxon>Eutheria</taxon>
        <taxon>Euarchontoglires</taxon>
        <taxon>Glires</taxon>
        <taxon>Rodentia</taxon>
        <taxon>Myomorpha</taxon>
        <taxon>Muroidea</taxon>
        <taxon>Muridae</taxon>
        <taxon>Murinae</taxon>
        <taxon>Mus</taxon>
        <taxon>Mus</taxon>
    </lineage>
</organism>
<sequence>MTPPCLNCSIFPGALSPNASRSPLVCNISEFKWPYQPEDLNLTDEALRLKYLGPQQMKQFVPICVTYLLIFVVGTLGNGLTCTVILRNKTMRTPTNFYLFSLAVSDMLVLLVGLPLELYEMQQNYPFQLGASACYFRILLLETVCLASVLNVTALSVERYVAVVRPLQAKSVMTRAHVRRMVGAIWVLATLFSLPNTSLHGLSQLTVPCRGPVPDSAICSLVGPMDFYKLVVLTTALLFFCLPMVTISVLYLLIGLRLRRERMLLQVEVKGRKTAATQETSHRRIQLQDRGRRQVTKMLFALVVVFGICWAPFHADRIMWSLVYGHSTEGLHLAYQCVHIASGIFFYLGSAANPVLYSLMSTRFRETFLQALGLGTQCCHRRQPYHGSHNHIRLTTGSTLCDVGHRNSRDEPLAVNEDPGCQQETDPS</sequence>
<protein>
    <recommendedName>
        <fullName>Neuromedin-U receptor 1</fullName>
        <shortName>NMU-R1</shortName>
    </recommendedName>
    <alternativeName>
        <fullName>G-protein coupled receptor 66</fullName>
    </alternativeName>
    <alternativeName>
        <fullName>G-protein coupled receptor FM-3</fullName>
    </alternativeName>
</protein>